<gene>
    <name type="primary">pex2</name>
    <name type="ORF">DDB_G0272234</name>
</gene>
<protein>
    <recommendedName>
        <fullName evidence="6">Peroxisome biogenesis factor 2</fullName>
        <ecNumber evidence="2">2.3.2.36</ecNumber>
    </recommendedName>
    <alternativeName>
        <fullName evidence="6">Peroxin-2</fullName>
    </alternativeName>
</protein>
<proteinExistence type="inferred from homology"/>
<evidence type="ECO:0000250" key="1">
    <source>
        <dbReference type="UniProtKB" id="G2Q1C9"/>
    </source>
</evidence>
<evidence type="ECO:0000250" key="2">
    <source>
        <dbReference type="UniProtKB" id="P32800"/>
    </source>
</evidence>
<evidence type="ECO:0000255" key="3"/>
<evidence type="ECO:0000255" key="4">
    <source>
        <dbReference type="PROSITE-ProRule" id="PRU00175"/>
    </source>
</evidence>
<evidence type="ECO:0000256" key="5">
    <source>
        <dbReference type="SAM" id="MobiDB-lite"/>
    </source>
</evidence>
<evidence type="ECO:0000305" key="6"/>
<name>PEX2_DICDI</name>
<organism>
    <name type="scientific">Dictyostelium discoideum</name>
    <name type="common">Social amoeba</name>
    <dbReference type="NCBI Taxonomy" id="44689"/>
    <lineage>
        <taxon>Eukaryota</taxon>
        <taxon>Amoebozoa</taxon>
        <taxon>Evosea</taxon>
        <taxon>Eumycetozoa</taxon>
        <taxon>Dictyostelia</taxon>
        <taxon>Dictyosteliales</taxon>
        <taxon>Dictyosteliaceae</taxon>
        <taxon>Dictyostelium</taxon>
    </lineage>
</organism>
<dbReference type="EC" id="2.3.2.36" evidence="2"/>
<dbReference type="EMBL" id="AAFI02000008">
    <property type="protein sequence ID" value="EAL71269.1"/>
    <property type="molecule type" value="Genomic_DNA"/>
</dbReference>
<dbReference type="RefSeq" id="XP_645304.1">
    <property type="nucleotide sequence ID" value="XM_640212.1"/>
</dbReference>
<dbReference type="SMR" id="Q75JQ3"/>
<dbReference type="FunCoup" id="Q75JQ3">
    <property type="interactions" value="271"/>
</dbReference>
<dbReference type="STRING" id="44689.Q75JQ3"/>
<dbReference type="GlyGen" id="Q75JQ3">
    <property type="glycosylation" value="1 site"/>
</dbReference>
<dbReference type="PaxDb" id="44689-DDB0238045"/>
<dbReference type="EnsemblProtists" id="EAL71269">
    <property type="protein sequence ID" value="EAL71269"/>
    <property type="gene ID" value="DDB_G0272234"/>
</dbReference>
<dbReference type="GeneID" id="8618470"/>
<dbReference type="KEGG" id="ddi:DDB_G0272234"/>
<dbReference type="dictyBase" id="DDB_G0272234">
    <property type="gene designation" value="pex2"/>
</dbReference>
<dbReference type="VEuPathDB" id="AmoebaDB:DDB_G0272234"/>
<dbReference type="eggNOG" id="KOG2879">
    <property type="taxonomic scope" value="Eukaryota"/>
</dbReference>
<dbReference type="HOGENOM" id="CLU_024591_3_1_1"/>
<dbReference type="InParanoid" id="Q75JQ3"/>
<dbReference type="OMA" id="WHGLMEL"/>
<dbReference type="PhylomeDB" id="Q75JQ3"/>
<dbReference type="UniPathway" id="UPA00143"/>
<dbReference type="PRO" id="PR:Q75JQ3"/>
<dbReference type="Proteomes" id="UP000002195">
    <property type="component" value="Chromosome 2"/>
</dbReference>
<dbReference type="GO" id="GO:0005778">
    <property type="term" value="C:peroxisomal membrane"/>
    <property type="evidence" value="ECO:0007669"/>
    <property type="project" value="UniProtKB-SubCell"/>
</dbReference>
<dbReference type="GO" id="GO:0016740">
    <property type="term" value="F:transferase activity"/>
    <property type="evidence" value="ECO:0007669"/>
    <property type="project" value="UniProtKB-KW"/>
</dbReference>
<dbReference type="GO" id="GO:0008270">
    <property type="term" value="F:zinc ion binding"/>
    <property type="evidence" value="ECO:0007669"/>
    <property type="project" value="UniProtKB-KW"/>
</dbReference>
<dbReference type="GO" id="GO:0007031">
    <property type="term" value="P:peroxisome organization"/>
    <property type="evidence" value="ECO:0000250"/>
    <property type="project" value="dictyBase"/>
</dbReference>
<dbReference type="GO" id="GO:0016558">
    <property type="term" value="P:protein import into peroxisome matrix"/>
    <property type="evidence" value="ECO:0007669"/>
    <property type="project" value="InterPro"/>
</dbReference>
<dbReference type="GO" id="GO:0016567">
    <property type="term" value="P:protein ubiquitination"/>
    <property type="evidence" value="ECO:0007669"/>
    <property type="project" value="UniProtKB-UniPathway"/>
</dbReference>
<dbReference type="CDD" id="cd16526">
    <property type="entry name" value="RING-HC_PEX2"/>
    <property type="match status" value="1"/>
</dbReference>
<dbReference type="FunFam" id="3.30.40.10:FF:000826">
    <property type="entry name" value="Peroxisome biogenesis factor 2"/>
    <property type="match status" value="1"/>
</dbReference>
<dbReference type="Gene3D" id="3.30.40.10">
    <property type="entry name" value="Zinc/RING finger domain, C3HC4 (zinc finger)"/>
    <property type="match status" value="1"/>
</dbReference>
<dbReference type="InterPro" id="IPR025654">
    <property type="entry name" value="PEX2/10"/>
</dbReference>
<dbReference type="InterPro" id="IPR006845">
    <property type="entry name" value="Pex_N"/>
</dbReference>
<dbReference type="InterPro" id="IPR045859">
    <property type="entry name" value="RING-HC_PEX2"/>
</dbReference>
<dbReference type="InterPro" id="IPR018957">
    <property type="entry name" value="Znf_C3HC4_RING-type"/>
</dbReference>
<dbReference type="InterPro" id="IPR001841">
    <property type="entry name" value="Znf_RING"/>
</dbReference>
<dbReference type="InterPro" id="IPR013083">
    <property type="entry name" value="Znf_RING/FYVE/PHD"/>
</dbReference>
<dbReference type="InterPro" id="IPR017907">
    <property type="entry name" value="Znf_RING_CS"/>
</dbReference>
<dbReference type="PANTHER" id="PTHR48178">
    <property type="entry name" value="PEROXISOME BIOGENESIS FACTOR 2"/>
    <property type="match status" value="1"/>
</dbReference>
<dbReference type="PANTHER" id="PTHR48178:SF1">
    <property type="entry name" value="PEROXISOME BIOGENESIS FACTOR 2"/>
    <property type="match status" value="1"/>
</dbReference>
<dbReference type="Pfam" id="PF04757">
    <property type="entry name" value="Pex2_Pex12"/>
    <property type="match status" value="1"/>
</dbReference>
<dbReference type="Pfam" id="PF00097">
    <property type="entry name" value="zf-C3HC4"/>
    <property type="match status" value="1"/>
</dbReference>
<dbReference type="SMART" id="SM00184">
    <property type="entry name" value="RING"/>
    <property type="match status" value="1"/>
</dbReference>
<dbReference type="SUPFAM" id="SSF57850">
    <property type="entry name" value="RING/U-box"/>
    <property type="match status" value="1"/>
</dbReference>
<dbReference type="PROSITE" id="PS00518">
    <property type="entry name" value="ZF_RING_1"/>
    <property type="match status" value="1"/>
</dbReference>
<dbReference type="PROSITE" id="PS50089">
    <property type="entry name" value="ZF_RING_2"/>
    <property type="match status" value="1"/>
</dbReference>
<sequence>MVDNYNNNNILPTNTSTTTTTNTTITPTPPLPPPPPISNILDNNNNNNLIKNDIKNDKVAVSNSNVRPSSSSVSYENSDWNKVYNSEREKLHEVNKQILNIKRPSTSIVRVSQLDSARLDEEILDLLRSQFMKIFTFFKPNFIHNFQPEINLVLKSVIYKLSIFNLGTTYGNQLQNLTYRNEKAFDPIRGSDQLNKLTMRQKWLSGLINIGGEWLWTRINRYLINNNWSEHPPNDIRKKFWNFLNFAESAYKALALLNFLTFLFNGKYVTLVNRILHMRLVYAHPTLSRNISFEYMNRLLVWHGFTEFILFIMPLINIDRIKSFLYRLLVKTSFGNSSGNNNNTASNPLQQLQKQQLLIQQQQMALAKCPICMNDPISMPYSADCGHLFCYYCIKTSCMIDSSFTCPRCNSLISNIKRFSIQD</sequence>
<comment type="function">
    <text evidence="2">E3 ubiquitin-protein ligase component of a retrotranslocation channel required for peroxisome organization by mediating export of the PEX5 receptor from peroxisomes to the cytosol, thereby promoting PEX5 recycling. The retrotranslocation channel is composed of PEX2, PEX10 and PEX12; each subunit contributing transmembrane segments that coassemble into an open channel that specifically allows the passage of PEX5 through the peroxisomal membrane. PEX2 also regulates peroxisome organization by acting as a E3 ubiquitin-protein ligase. PEX2 ubiquitinates PEX5 during its passage through the retrotranslocation channel: catalyzes monoubiquitination of PEX5 at 'Cys-11', a modification that acts as a signal for PEX5 extraction into the cytosol.</text>
</comment>
<comment type="catalytic activity">
    <reaction evidence="2">
        <text>[E2 ubiquitin-conjugating enzyme]-S-ubiquitinyl-L-cysteine + [acceptor protein]-L-cysteine = [E2 ubiquitin-conjugating enzyme]-L-cysteine + [acceptor protein]-S-ubiquitinyl-L-cysteine.</text>
        <dbReference type="EC" id="2.3.2.36"/>
    </reaction>
</comment>
<comment type="pathway">
    <text evidence="2">Protein modification; protein ubiquitination.</text>
</comment>
<comment type="subunit">
    <text evidence="2">Component of the PEX2-PEX10-PEX12 retrotranslocation channel.</text>
</comment>
<comment type="subcellular location">
    <subcellularLocation>
        <location evidence="2">Peroxisome membrane</location>
        <topology evidence="3">Multi-pass membrane protein</topology>
    </subcellularLocation>
</comment>
<comment type="domain">
    <text evidence="1">The three subunits of the retrotranslocation channel (PEX2, PEX10 and PEX12) coassemble in the membrane into a channel with an open 10 Angstrom pore. The RING-type zinc-fingers that catalyze PEX5 receptor ubiquitination are positioned above the pore on the cytosolic side of the complex.</text>
</comment>
<comment type="similarity">
    <text evidence="6">Belongs to the pex2/pex10/pex12 family.</text>
</comment>
<keyword id="KW-0472">Membrane</keyword>
<keyword id="KW-0479">Metal-binding</keyword>
<keyword id="KW-0576">Peroxisome</keyword>
<keyword id="KW-0962">Peroxisome biogenesis</keyword>
<keyword id="KW-0653">Protein transport</keyword>
<keyword id="KW-1185">Reference proteome</keyword>
<keyword id="KW-0808">Transferase</keyword>
<keyword id="KW-0812">Transmembrane</keyword>
<keyword id="KW-1133">Transmembrane helix</keyword>
<keyword id="KW-0813">Transport</keyword>
<keyword id="KW-0833">Ubl conjugation pathway</keyword>
<keyword id="KW-0862">Zinc</keyword>
<keyword id="KW-0863">Zinc-finger</keyword>
<reference key="1">
    <citation type="journal article" date="2002" name="Nature">
        <title>Sequence and analysis of chromosome 2 of Dictyostelium discoideum.</title>
        <authorList>
            <person name="Gloeckner G."/>
            <person name="Eichinger L."/>
            <person name="Szafranski K."/>
            <person name="Pachebat J.A."/>
            <person name="Bankier A.T."/>
            <person name="Dear P.H."/>
            <person name="Lehmann R."/>
            <person name="Baumgart C."/>
            <person name="Parra G."/>
            <person name="Abril J.F."/>
            <person name="Guigo R."/>
            <person name="Kumpf K."/>
            <person name="Tunggal B."/>
            <person name="Cox E.C."/>
            <person name="Quail M.A."/>
            <person name="Platzer M."/>
            <person name="Rosenthal A."/>
            <person name="Noegel A.A."/>
        </authorList>
    </citation>
    <scope>NUCLEOTIDE SEQUENCE [LARGE SCALE GENOMIC DNA]</scope>
    <source>
        <strain>AX4</strain>
    </source>
</reference>
<reference key="2">
    <citation type="journal article" date="2005" name="Nature">
        <title>The genome of the social amoeba Dictyostelium discoideum.</title>
        <authorList>
            <person name="Eichinger L."/>
            <person name="Pachebat J.A."/>
            <person name="Gloeckner G."/>
            <person name="Rajandream M.A."/>
            <person name="Sucgang R."/>
            <person name="Berriman M."/>
            <person name="Song J."/>
            <person name="Olsen R."/>
            <person name="Szafranski K."/>
            <person name="Xu Q."/>
            <person name="Tunggal B."/>
            <person name="Kummerfeld S."/>
            <person name="Madera M."/>
            <person name="Konfortov B.A."/>
            <person name="Rivero F."/>
            <person name="Bankier A.T."/>
            <person name="Lehmann R."/>
            <person name="Hamlin N."/>
            <person name="Davies R."/>
            <person name="Gaudet P."/>
            <person name="Fey P."/>
            <person name="Pilcher K."/>
            <person name="Chen G."/>
            <person name="Saunders D."/>
            <person name="Sodergren E.J."/>
            <person name="Davis P."/>
            <person name="Kerhornou A."/>
            <person name="Nie X."/>
            <person name="Hall N."/>
            <person name="Anjard C."/>
            <person name="Hemphill L."/>
            <person name="Bason N."/>
            <person name="Farbrother P."/>
            <person name="Desany B."/>
            <person name="Just E."/>
            <person name="Morio T."/>
            <person name="Rost R."/>
            <person name="Churcher C.M."/>
            <person name="Cooper J."/>
            <person name="Haydock S."/>
            <person name="van Driessche N."/>
            <person name="Cronin A."/>
            <person name="Goodhead I."/>
            <person name="Muzny D.M."/>
            <person name="Mourier T."/>
            <person name="Pain A."/>
            <person name="Lu M."/>
            <person name="Harper D."/>
            <person name="Lindsay R."/>
            <person name="Hauser H."/>
            <person name="James K.D."/>
            <person name="Quiles M."/>
            <person name="Madan Babu M."/>
            <person name="Saito T."/>
            <person name="Buchrieser C."/>
            <person name="Wardroper A."/>
            <person name="Felder M."/>
            <person name="Thangavelu M."/>
            <person name="Johnson D."/>
            <person name="Knights A."/>
            <person name="Loulseged H."/>
            <person name="Mungall K.L."/>
            <person name="Oliver K."/>
            <person name="Price C."/>
            <person name="Quail M.A."/>
            <person name="Urushihara H."/>
            <person name="Hernandez J."/>
            <person name="Rabbinowitsch E."/>
            <person name="Steffen D."/>
            <person name="Sanders M."/>
            <person name="Ma J."/>
            <person name="Kohara Y."/>
            <person name="Sharp S."/>
            <person name="Simmonds M.N."/>
            <person name="Spiegler S."/>
            <person name="Tivey A."/>
            <person name="Sugano S."/>
            <person name="White B."/>
            <person name="Walker D."/>
            <person name="Woodward J.R."/>
            <person name="Winckler T."/>
            <person name="Tanaka Y."/>
            <person name="Shaulsky G."/>
            <person name="Schleicher M."/>
            <person name="Weinstock G.M."/>
            <person name="Rosenthal A."/>
            <person name="Cox E.C."/>
            <person name="Chisholm R.L."/>
            <person name="Gibbs R.A."/>
            <person name="Loomis W.F."/>
            <person name="Platzer M."/>
            <person name="Kay R.R."/>
            <person name="Williams J.G."/>
            <person name="Dear P.H."/>
            <person name="Noegel A.A."/>
            <person name="Barrell B.G."/>
            <person name="Kuspa A."/>
        </authorList>
    </citation>
    <scope>NUCLEOTIDE SEQUENCE [LARGE SCALE GENOMIC DNA]</scope>
    <source>
        <strain>AX4</strain>
    </source>
</reference>
<accession>Q75JQ3</accession>
<accession>Q559N0</accession>
<feature type="chain" id="PRO_0000371403" description="Peroxisome biogenesis factor 2">
    <location>
        <begin position="1"/>
        <end position="423"/>
    </location>
</feature>
<feature type="topological domain" description="Peroxisomal matrix" evidence="1">
    <location>
        <begin position="1"/>
        <end position="109"/>
    </location>
</feature>
<feature type="transmembrane region" description="Helical; Name=TM1" evidence="1">
    <location>
        <begin position="110"/>
        <end position="136"/>
    </location>
</feature>
<feature type="topological domain" description="Cytoplasmic" evidence="1">
    <location>
        <begin position="137"/>
        <end position="142"/>
    </location>
</feature>
<feature type="transmembrane region" description="Helical; Name=TM2" evidence="1">
    <location>
        <begin position="143"/>
        <end position="168"/>
    </location>
</feature>
<feature type="topological domain" description="Peroxisomal matrix" evidence="1">
    <location>
        <begin position="169"/>
        <end position="197"/>
    </location>
</feature>
<feature type="transmembrane region" description="Helical; Name=TM3" evidence="1">
    <location>
        <begin position="198"/>
        <end position="224"/>
    </location>
</feature>
<feature type="topological domain" description="Cytoplasmic" evidence="1">
    <location>
        <begin position="225"/>
        <end position="234"/>
    </location>
</feature>
<feature type="transmembrane region" description="Helical; Name=TM4" evidence="1">
    <location>
        <begin position="235"/>
        <end position="265"/>
    </location>
</feature>
<feature type="topological domain" description="Peroxisomal matrix" evidence="1">
    <location>
        <begin position="266"/>
        <end position="292"/>
    </location>
</feature>
<feature type="transmembrane region" description="Helical; Name=TM5" evidence="1">
    <location>
        <begin position="293"/>
        <end position="316"/>
    </location>
</feature>
<feature type="topological domain" description="Cytoplasmic" evidence="1">
    <location>
        <begin position="317"/>
        <end position="423"/>
    </location>
</feature>
<feature type="zinc finger region" description="RING-type" evidence="4">
    <location>
        <begin position="369"/>
        <end position="410"/>
    </location>
</feature>
<feature type="region of interest" description="Disordered" evidence="5">
    <location>
        <begin position="1"/>
        <end position="46"/>
    </location>
</feature>
<feature type="compositionally biased region" description="Low complexity" evidence="5">
    <location>
        <begin position="1"/>
        <end position="26"/>
    </location>
</feature>
<feature type="compositionally biased region" description="Pro residues" evidence="5">
    <location>
        <begin position="27"/>
        <end position="37"/>
    </location>
</feature>
<feature type="binding site" evidence="1">
    <location>
        <position position="369"/>
    </location>
    <ligand>
        <name>Zn(2+)</name>
        <dbReference type="ChEBI" id="CHEBI:29105"/>
        <label>1</label>
    </ligand>
</feature>
<feature type="binding site" evidence="1">
    <location>
        <position position="372"/>
    </location>
    <ligand>
        <name>Zn(2+)</name>
        <dbReference type="ChEBI" id="CHEBI:29105"/>
        <label>1</label>
    </ligand>
</feature>
<feature type="binding site" evidence="1">
    <location>
        <position position="385"/>
    </location>
    <ligand>
        <name>Zn(2+)</name>
        <dbReference type="ChEBI" id="CHEBI:29105"/>
        <label>2</label>
    </ligand>
</feature>
<feature type="binding site" evidence="1">
    <location>
        <position position="387"/>
    </location>
    <ligand>
        <name>Zn(2+)</name>
        <dbReference type="ChEBI" id="CHEBI:29105"/>
        <label>2</label>
    </ligand>
</feature>
<feature type="binding site" evidence="1">
    <location>
        <position position="390"/>
    </location>
    <ligand>
        <name>Zn(2+)</name>
        <dbReference type="ChEBI" id="CHEBI:29105"/>
        <label>1</label>
    </ligand>
</feature>
<feature type="binding site" evidence="1">
    <location>
        <position position="393"/>
    </location>
    <ligand>
        <name>Zn(2+)</name>
        <dbReference type="ChEBI" id="CHEBI:29105"/>
        <label>1</label>
    </ligand>
</feature>
<feature type="binding site" evidence="1">
    <location>
        <position position="406"/>
    </location>
    <ligand>
        <name>Zn(2+)</name>
        <dbReference type="ChEBI" id="CHEBI:29105"/>
        <label>2</label>
    </ligand>
</feature>
<feature type="binding site" evidence="1">
    <location>
        <position position="409"/>
    </location>
    <ligand>
        <name>Zn(2+)</name>
        <dbReference type="ChEBI" id="CHEBI:29105"/>
        <label>2</label>
    </ligand>
</feature>